<accession>Q5M8Y2</accession>
<evidence type="ECO:0000250" key="1"/>
<evidence type="ECO:0000250" key="2">
    <source>
        <dbReference type="UniProtKB" id="Q969M7"/>
    </source>
</evidence>
<evidence type="ECO:0000255" key="3">
    <source>
        <dbReference type="PROSITE-ProRule" id="PRU00388"/>
    </source>
</evidence>
<evidence type="ECO:0000255" key="4">
    <source>
        <dbReference type="PROSITE-ProRule" id="PRU10133"/>
    </source>
</evidence>
<evidence type="ECO:0000256" key="5">
    <source>
        <dbReference type="SAM" id="MobiDB-lite"/>
    </source>
</evidence>
<gene>
    <name type="primary">ube2f</name>
    <name type="ORF">TTpA011n20.1</name>
</gene>
<name>UBE2F_XENTR</name>
<protein>
    <recommendedName>
        <fullName>NEDD8-conjugating enzyme UBE2F</fullName>
        <ecNumber evidence="2">2.3.2.34</ecNumber>
    </recommendedName>
    <alternativeName>
        <fullName>NEDD8 carrier protein UBE2F</fullName>
    </alternativeName>
    <alternativeName>
        <fullName>NEDD8 protein ligase UBE2F</fullName>
    </alternativeName>
    <alternativeName>
        <fullName>NEDD8-conjugating enzyme 2</fullName>
    </alternativeName>
    <alternativeName>
        <fullName>RING-type E3 NEDD8 transferase UBE2F</fullName>
    </alternativeName>
    <alternativeName>
        <fullName>Ubiquitin-conjugating enzyme E2 F</fullName>
    </alternativeName>
</protein>
<feature type="chain" id="PRO_0000263082" description="NEDD8-conjugating enzyme UBE2F">
    <location>
        <begin position="1"/>
        <end position="185"/>
    </location>
</feature>
<feature type="domain" description="UBC core" evidence="3">
    <location>
        <begin position="32"/>
        <end position="185"/>
    </location>
</feature>
<feature type="region of interest" description="Disordered" evidence="5">
    <location>
        <begin position="1"/>
        <end position="29"/>
    </location>
</feature>
<feature type="region of interest" description="Interaction with uba3" evidence="1">
    <location>
        <begin position="1"/>
        <end position="29"/>
    </location>
</feature>
<feature type="active site" description="Glycyl thioester intermediate" evidence="3 4">
    <location>
        <position position="116"/>
    </location>
</feature>
<sequence>MLTLASKLKRDDGVKGSRTSSTTSDSTRRVSVRDRLLVKEVAELEANLPCTCKVNFPDPNKLHYFHLTVSPDESYYQGGRFQFEIEVPDAYNMVPPKVKCLTRIWHPNITETGEICLSLLREHSIDGTGWAPTRTLKDVVWGLNSLFTDLLNFDDPLNIEAAEHHLRDKDEYRNKVEDYIKRYAR</sequence>
<organism>
    <name type="scientific">Xenopus tropicalis</name>
    <name type="common">Western clawed frog</name>
    <name type="synonym">Silurana tropicalis</name>
    <dbReference type="NCBI Taxonomy" id="8364"/>
    <lineage>
        <taxon>Eukaryota</taxon>
        <taxon>Metazoa</taxon>
        <taxon>Chordata</taxon>
        <taxon>Craniata</taxon>
        <taxon>Vertebrata</taxon>
        <taxon>Euteleostomi</taxon>
        <taxon>Amphibia</taxon>
        <taxon>Batrachia</taxon>
        <taxon>Anura</taxon>
        <taxon>Pipoidea</taxon>
        <taxon>Pipidae</taxon>
        <taxon>Xenopodinae</taxon>
        <taxon>Xenopus</taxon>
        <taxon>Silurana</taxon>
    </lineage>
</organism>
<comment type="function">
    <text evidence="2">Accepts the ubiquitin-like protein NEDD8 from the UBA3-NAE1 E1 complex and catalyzes its covalent attachment to other proteins. Together with the E3 ubiquitin ligase rnf7/rbx2, specifically neddylates cullin-5 (cul5). Does not neddylate cul1, cul2, cul3, cul4a or cul4b.</text>
</comment>
<comment type="catalytic activity">
    <reaction evidence="2">
        <text>[E1 NEDD8-activating enzyme]-S-[NEDD8 protein]-yl-L-cysteine + [E2 NEDD8-conjugating enzyme]-L-cysteine = [E1 NEDD8-activating enzyme]-L-cysteine + [E2 NEDD8-conjugating enzyme]-S-[NEDD8-protein]-yl-L-cysteine.</text>
        <dbReference type="EC" id="2.3.2.34"/>
    </reaction>
</comment>
<comment type="pathway">
    <text evidence="2">Protein modification; protein neddylation.</text>
</comment>
<comment type="similarity">
    <text evidence="3">Belongs to the ubiquitin-conjugating enzyme family. UBE2F subfamily.</text>
</comment>
<reference key="1">
    <citation type="submission" date="2006-10" db="EMBL/GenBank/DDBJ databases">
        <authorList>
            <consortium name="Sanger Xenopus tropicalis EST/cDNA project"/>
        </authorList>
    </citation>
    <scope>NUCLEOTIDE SEQUENCE [LARGE SCALE MRNA]</scope>
    <source>
        <tissue>Tadpole</tissue>
    </source>
</reference>
<reference key="2">
    <citation type="submission" date="2004-12" db="EMBL/GenBank/DDBJ databases">
        <authorList>
            <consortium name="NIH - Xenopus Gene Collection (XGC) project"/>
        </authorList>
    </citation>
    <scope>NUCLEOTIDE SEQUENCE [LARGE SCALE MRNA]</scope>
</reference>
<proteinExistence type="evidence at transcript level"/>
<keyword id="KW-0067">ATP-binding</keyword>
<keyword id="KW-0547">Nucleotide-binding</keyword>
<keyword id="KW-1185">Reference proteome</keyword>
<keyword id="KW-0808">Transferase</keyword>
<keyword id="KW-0833">Ubl conjugation pathway</keyword>
<dbReference type="EC" id="2.3.2.34" evidence="2"/>
<dbReference type="EMBL" id="CR848249">
    <property type="protein sequence ID" value="CAJ82970.1"/>
    <property type="molecule type" value="mRNA"/>
</dbReference>
<dbReference type="EMBL" id="BC087785">
    <property type="protein sequence ID" value="AAH87785.1"/>
    <property type="molecule type" value="mRNA"/>
</dbReference>
<dbReference type="RefSeq" id="NP_001011221.1">
    <property type="nucleotide sequence ID" value="NM_001011221.1"/>
</dbReference>
<dbReference type="SMR" id="Q5M8Y2"/>
<dbReference type="FunCoup" id="Q5M8Y2">
    <property type="interactions" value="2786"/>
</dbReference>
<dbReference type="STRING" id="8364.ENSXETP00000051271"/>
<dbReference type="PaxDb" id="8364-ENSXETP00000023831"/>
<dbReference type="DNASU" id="496657"/>
<dbReference type="GeneID" id="496657"/>
<dbReference type="KEGG" id="xtr:496657"/>
<dbReference type="AGR" id="Xenbase:XB-GENE-960076"/>
<dbReference type="CTD" id="140739"/>
<dbReference type="Xenbase" id="XB-GENE-960076">
    <property type="gene designation" value="ube2f"/>
</dbReference>
<dbReference type="eggNOG" id="KOG0420">
    <property type="taxonomic scope" value="Eukaryota"/>
</dbReference>
<dbReference type="HOGENOM" id="CLU_030988_6_4_1"/>
<dbReference type="InParanoid" id="Q5M8Y2"/>
<dbReference type="OMA" id="VMQYAKR"/>
<dbReference type="OrthoDB" id="10249039at2759"/>
<dbReference type="UniPathway" id="UPA00885"/>
<dbReference type="Proteomes" id="UP000008143">
    <property type="component" value="Chromosome 9"/>
</dbReference>
<dbReference type="Bgee" id="ENSXETG00000010905">
    <property type="expression patterns" value="Expressed in skeletal muscle tissue and 14 other cell types or tissues"/>
</dbReference>
<dbReference type="ExpressionAtlas" id="Q5M8Y2">
    <property type="expression patterns" value="baseline"/>
</dbReference>
<dbReference type="GO" id="GO:0005524">
    <property type="term" value="F:ATP binding"/>
    <property type="evidence" value="ECO:0007669"/>
    <property type="project" value="UniProtKB-KW"/>
</dbReference>
<dbReference type="GO" id="GO:0061654">
    <property type="term" value="F:NEDD8 conjugating enzyme activity"/>
    <property type="evidence" value="ECO:0000250"/>
    <property type="project" value="UniProtKB"/>
</dbReference>
<dbReference type="GO" id="GO:0061663">
    <property type="term" value="F:NEDD8 ligase activity"/>
    <property type="evidence" value="ECO:0007669"/>
    <property type="project" value="UniProtKB-EC"/>
</dbReference>
<dbReference type="GO" id="GO:0045116">
    <property type="term" value="P:protein neddylation"/>
    <property type="evidence" value="ECO:0000250"/>
    <property type="project" value="UniProtKB"/>
</dbReference>
<dbReference type="CDD" id="cd23794">
    <property type="entry name" value="UBCc_UBE2F_UBE2M"/>
    <property type="match status" value="1"/>
</dbReference>
<dbReference type="FunFam" id="3.10.110.10:FF:000033">
    <property type="entry name" value="NEDD8-conjugating enzyme UBE2F"/>
    <property type="match status" value="1"/>
</dbReference>
<dbReference type="Gene3D" id="3.10.110.10">
    <property type="entry name" value="Ubiquitin Conjugating Enzyme"/>
    <property type="match status" value="1"/>
</dbReference>
<dbReference type="InterPro" id="IPR000608">
    <property type="entry name" value="UBQ-conjugat_E2_core"/>
</dbReference>
<dbReference type="InterPro" id="IPR023313">
    <property type="entry name" value="UBQ-conjugating_AS"/>
</dbReference>
<dbReference type="InterPro" id="IPR016135">
    <property type="entry name" value="UBQ-conjugating_enzyme/RWD"/>
</dbReference>
<dbReference type="PANTHER" id="PTHR24068">
    <property type="entry name" value="UBIQUITIN-CONJUGATING ENZYME E2"/>
    <property type="match status" value="1"/>
</dbReference>
<dbReference type="Pfam" id="PF00179">
    <property type="entry name" value="UQ_con"/>
    <property type="match status" value="1"/>
</dbReference>
<dbReference type="SMART" id="SM00212">
    <property type="entry name" value="UBCc"/>
    <property type="match status" value="1"/>
</dbReference>
<dbReference type="SUPFAM" id="SSF54495">
    <property type="entry name" value="UBC-like"/>
    <property type="match status" value="1"/>
</dbReference>
<dbReference type="PROSITE" id="PS00183">
    <property type="entry name" value="UBC_1"/>
    <property type="match status" value="1"/>
</dbReference>
<dbReference type="PROSITE" id="PS50127">
    <property type="entry name" value="UBC_2"/>
    <property type="match status" value="1"/>
</dbReference>